<evidence type="ECO:0000255" key="1"/>
<evidence type="ECO:0000255" key="2">
    <source>
        <dbReference type="PROSITE-ProRule" id="PRU00498"/>
    </source>
</evidence>
<evidence type="ECO:0000269" key="3">
    <source>
    </source>
</evidence>
<evidence type="ECO:0000303" key="4">
    <source>
    </source>
</evidence>
<evidence type="ECO:0000305" key="5">
    <source>
    </source>
</evidence>
<name>SDNP_SORAA</name>
<protein>
    <recommendedName>
        <fullName evidence="4">Sordarin/hypoxysordarin biosynthesis cluster protein P</fullName>
    </recommendedName>
</protein>
<dbReference type="EMBL" id="LC079035">
    <property type="protein sequence ID" value="BAV32160.1"/>
    <property type="molecule type" value="Genomic_DNA"/>
</dbReference>
<dbReference type="GlyCosmos" id="A0A1B4XBI5">
    <property type="glycosylation" value="3 sites, No reported glycans"/>
</dbReference>
<dbReference type="GO" id="GO:0016020">
    <property type="term" value="C:membrane"/>
    <property type="evidence" value="ECO:0007669"/>
    <property type="project" value="UniProtKB-SubCell"/>
</dbReference>
<dbReference type="GO" id="GO:0017000">
    <property type="term" value="P:antibiotic biosynthetic process"/>
    <property type="evidence" value="ECO:0007669"/>
    <property type="project" value="UniProtKB-KW"/>
</dbReference>
<keyword id="KW-0045">Antibiotic biosynthesis</keyword>
<keyword id="KW-0325">Glycoprotein</keyword>
<keyword id="KW-0472">Membrane</keyword>
<keyword id="KW-0812">Transmembrane</keyword>
<keyword id="KW-1133">Transmembrane helix</keyword>
<feature type="chain" id="PRO_0000441059" description="Sordarin/hypoxysordarin biosynthesis cluster protein P">
    <location>
        <begin position="1"/>
        <end position="272"/>
    </location>
</feature>
<feature type="transmembrane region" description="Helical" evidence="1">
    <location>
        <begin position="31"/>
        <end position="51"/>
    </location>
</feature>
<feature type="transmembrane region" description="Helical" evidence="1">
    <location>
        <begin position="67"/>
        <end position="87"/>
    </location>
</feature>
<feature type="glycosylation site" description="N-linked (GlcNAc...) asparagine" evidence="2">
    <location>
        <position position="6"/>
    </location>
</feature>
<feature type="glycosylation site" description="N-linked (GlcNAc...) asparagine" evidence="2">
    <location>
        <position position="23"/>
    </location>
</feature>
<feature type="glycosylation site" description="N-linked (GlcNAc...) asparagine" evidence="2">
    <location>
        <position position="208"/>
    </location>
</feature>
<reference key="1">
    <citation type="journal article" date="2016" name="J. Antibiot.">
        <title>Genome mining of the sordarin biosynthetic gene cluster from Sordaria araneosa Cain ATCC 36386: characterization of cycloaraneosene synthase and GDP-6-deoxyaltrose transferase.</title>
        <authorList>
            <person name="Kudo F."/>
            <person name="Matsuura Y."/>
            <person name="Hayashi T."/>
            <person name="Fukushima M."/>
            <person name="Eguchi T."/>
        </authorList>
    </citation>
    <scope>NUCLEOTIDE SEQUENCE [GENOMIC DNA]</scope>
    <scope>FUNCTION</scope>
    <scope>PATHWAY</scope>
    <source>
        <strain>ATCC 36386 / NRRL 3196</strain>
    </source>
</reference>
<gene>
    <name evidence="4" type="primary">sdnP</name>
</gene>
<sequence length="272" mass="30637">MSSANNISGAPETGDFTFTQHFNVSATPSEFLASIWPYRHMMWIGPMLLFLAPRFYNTLKNTAFSRAYHMPYSILALHVFISFVDLANYHTQVFLANGAIHPASQIDALICIVQCWTSLYITAQHHLLPKIAMEVTRATFHCMSVQRLFATAMAIRTGDPRWHEASIMLLNNFIWARLLIAYCKMGRFSWKQRYGVGIVGSHLLGMWNGTYPHGIAIYCGLMVVLLNIDGWAKGRDSSVARALRYLGLATPADWYIKVGIDPPTKSAEKKEA</sequence>
<proteinExistence type="inferred from homology"/>
<comment type="function">
    <text evidence="3">Part of the gene cluster that mediates the biosynthesis of sordarin and hypoxysordarin, glycoside antibiotics with a unique tetracyclic diterpene aglycone structure (PubMed:27072286). First, the geranylgeranyl diphosphate synthase sdnC constructs GGDP from farnesyl diphosphate and isopentenyl diphosphate (PubMed:27072286). The diterpene cyclase sdnA then catalyzes the cyclization of GGDP to afford cycloaraneosene (PubMed:27072286). Cycloaraneosene is then hydroxylated four times by the putative cytochrome P450 monooxygenases sdnB, sdnE, sdnF and sdnH to give a hydroxylated cycloaraneosene derivative such as cycloaraneosene-8,9,13,19-tetraol (PubMed:27072286). Although the order of the hydroxylations is unclear, at least C8, C9 and C13 of the cycloaraneosene skeleton are hydroxylated before the sordaricin formation (PubMed:27072286). Dehydration of the 13-hydroxy group of the hydroxylated cycloaraneosene derivative might be catalyzed by an unassigned hypothetical protein such as sdnG and sdnP to construct the cyclopentadiene moiety (PubMed:27072286). The FAD-dependent oxidoreductase sdnN is proposed to catalyze the oxidation at C9 of the hydroxylated cycloaraneosene derivative and also catalyze the Baeyer-Villiger oxidation to give the lactone intermediate (PubMed:27072286). The presumed lactone intermediate would be hydrolyzed to give an acrolein moiety and a carboxylate moiety (PubMed:27072286). Then, [4+2]cycloaddition would occur between the acrolein moiety and the cyclopentadiene moiety to give sordaricin (PubMed:27072286). SdnN might also be involved in the [4+2]cycloaddition after the hypothesized oxidation to accommodate the oxidized product and prompt the [4+2]cycloaddition (PubMed:27072286). GDP-6-deoxy-D-altrose may be biosynthesized from GDP-D-mannose by the putative GDP-mannose-4,6-dehydratase sdnI and the short-chain dehydrogenase sdnK (PubMed:27072286). The glycosyltransferase sdnJ catalyzes the attachment of 6-deoxy-D-altrose onto the 19-hydroxy group of sordaricin to give 4'-O-demethylsordarin (PubMed:27072286). The methyltransferase sdnD would complete the biosynthesis of sordarin (PubMed:27072286). Sordarin can be further modified into hypoxysordarin (PubMed:27072286). The unique acyl chain at the 3'-hydroxy group of hypoxysordarin would be constructed by an iterative type I PKS sdnO and the trans-acting polyketide methyltransferase sdnL. SdnL would be responsible for the introduction of an alpha-methyl group of the polyketide chain (PubMed:27072286). Alternatively, the beta-lactamase-like protein sdnR might be responsible for the cleavage and transfer of the polyketide chain from the PKS sdnO to sordarin (PubMed:27072286). Two putative cytochrome P450 monooxygenases, sdnQ and sdnT, might catalyze the epoxidations of the polyketide chain to complete the biosynthesis of hypoxysordarin (PubMed:27072286). Transcriptional regulators sdnM and sdnS are presumably encoded for the transcriptional regulation of the expression of the sdn gene cluster (PubMed:27072286).</text>
</comment>
<comment type="pathway">
    <text evidence="5">Antibiotic biosynthesis.</text>
</comment>
<comment type="subcellular location">
    <subcellularLocation>
        <location evidence="1">Membrane</location>
        <topology evidence="1">Multi-pass membrane protein</topology>
    </subcellularLocation>
</comment>
<accession>A0A1B4XBI5</accession>
<organism>
    <name type="scientific">Sordaria araneosa</name>
    <name type="common">Pleurage araneosa</name>
    <dbReference type="NCBI Taxonomy" id="573841"/>
    <lineage>
        <taxon>Eukaryota</taxon>
        <taxon>Fungi</taxon>
        <taxon>Dikarya</taxon>
        <taxon>Ascomycota</taxon>
        <taxon>Pezizomycotina</taxon>
        <taxon>Sordariomycetes</taxon>
        <taxon>Sordariomycetidae</taxon>
        <taxon>Sordariales</taxon>
        <taxon>Sordariaceae</taxon>
        <taxon>Sordaria</taxon>
    </lineage>
</organism>